<keyword id="KW-1185">Reference proteome</keyword>
<keyword id="KW-0687">Ribonucleoprotein</keyword>
<keyword id="KW-0689">Ribosomal protein</keyword>
<keyword id="KW-0694">RNA-binding</keyword>
<keyword id="KW-0699">rRNA-binding</keyword>
<dbReference type="EMBL" id="CP000961">
    <property type="protein sequence ID" value="ACA88466.1"/>
    <property type="molecule type" value="Genomic_DNA"/>
</dbReference>
<dbReference type="RefSeq" id="WP_005497284.1">
    <property type="nucleotide sequence ID" value="NC_010506.1"/>
</dbReference>
<dbReference type="SMR" id="B1KHY8"/>
<dbReference type="STRING" id="392500.Swoo_4210"/>
<dbReference type="KEGG" id="swd:Swoo_4210"/>
<dbReference type="eggNOG" id="COG0238">
    <property type="taxonomic scope" value="Bacteria"/>
</dbReference>
<dbReference type="HOGENOM" id="CLU_148710_2_3_6"/>
<dbReference type="Proteomes" id="UP000002168">
    <property type="component" value="Chromosome"/>
</dbReference>
<dbReference type="GO" id="GO:0022627">
    <property type="term" value="C:cytosolic small ribosomal subunit"/>
    <property type="evidence" value="ECO:0007669"/>
    <property type="project" value="TreeGrafter"/>
</dbReference>
<dbReference type="GO" id="GO:0070181">
    <property type="term" value="F:small ribosomal subunit rRNA binding"/>
    <property type="evidence" value="ECO:0007669"/>
    <property type="project" value="TreeGrafter"/>
</dbReference>
<dbReference type="GO" id="GO:0003735">
    <property type="term" value="F:structural constituent of ribosome"/>
    <property type="evidence" value="ECO:0007669"/>
    <property type="project" value="InterPro"/>
</dbReference>
<dbReference type="GO" id="GO:0006412">
    <property type="term" value="P:translation"/>
    <property type="evidence" value="ECO:0007669"/>
    <property type="project" value="UniProtKB-UniRule"/>
</dbReference>
<dbReference type="FunFam" id="4.10.640.10:FF:000001">
    <property type="entry name" value="30S ribosomal protein S18"/>
    <property type="match status" value="1"/>
</dbReference>
<dbReference type="Gene3D" id="4.10.640.10">
    <property type="entry name" value="Ribosomal protein S18"/>
    <property type="match status" value="1"/>
</dbReference>
<dbReference type="HAMAP" id="MF_00270">
    <property type="entry name" value="Ribosomal_bS18"/>
    <property type="match status" value="1"/>
</dbReference>
<dbReference type="InterPro" id="IPR001648">
    <property type="entry name" value="Ribosomal_bS18"/>
</dbReference>
<dbReference type="InterPro" id="IPR018275">
    <property type="entry name" value="Ribosomal_bS18_CS"/>
</dbReference>
<dbReference type="InterPro" id="IPR036870">
    <property type="entry name" value="Ribosomal_bS18_sf"/>
</dbReference>
<dbReference type="NCBIfam" id="TIGR00165">
    <property type="entry name" value="S18"/>
    <property type="match status" value="1"/>
</dbReference>
<dbReference type="PANTHER" id="PTHR13479">
    <property type="entry name" value="30S RIBOSOMAL PROTEIN S18"/>
    <property type="match status" value="1"/>
</dbReference>
<dbReference type="PANTHER" id="PTHR13479:SF40">
    <property type="entry name" value="SMALL RIBOSOMAL SUBUNIT PROTEIN BS18M"/>
    <property type="match status" value="1"/>
</dbReference>
<dbReference type="Pfam" id="PF01084">
    <property type="entry name" value="Ribosomal_S18"/>
    <property type="match status" value="1"/>
</dbReference>
<dbReference type="PRINTS" id="PR00974">
    <property type="entry name" value="RIBOSOMALS18"/>
</dbReference>
<dbReference type="SUPFAM" id="SSF46911">
    <property type="entry name" value="Ribosomal protein S18"/>
    <property type="match status" value="1"/>
</dbReference>
<dbReference type="PROSITE" id="PS00057">
    <property type="entry name" value="RIBOSOMAL_S18"/>
    <property type="match status" value="1"/>
</dbReference>
<feature type="chain" id="PRO_1000114451" description="Small ribosomal subunit protein bS18">
    <location>
        <begin position="1"/>
        <end position="75"/>
    </location>
</feature>
<name>RS18_SHEWM</name>
<evidence type="ECO:0000255" key="1">
    <source>
        <dbReference type="HAMAP-Rule" id="MF_00270"/>
    </source>
</evidence>
<evidence type="ECO:0000305" key="2"/>
<protein>
    <recommendedName>
        <fullName evidence="1">Small ribosomal subunit protein bS18</fullName>
    </recommendedName>
    <alternativeName>
        <fullName evidence="2">30S ribosomal protein S18</fullName>
    </alternativeName>
</protein>
<organism>
    <name type="scientific">Shewanella woodyi (strain ATCC 51908 / MS32)</name>
    <dbReference type="NCBI Taxonomy" id="392500"/>
    <lineage>
        <taxon>Bacteria</taxon>
        <taxon>Pseudomonadati</taxon>
        <taxon>Pseudomonadota</taxon>
        <taxon>Gammaproteobacteria</taxon>
        <taxon>Alteromonadales</taxon>
        <taxon>Shewanellaceae</taxon>
        <taxon>Shewanella</taxon>
    </lineage>
</organism>
<proteinExistence type="inferred from homology"/>
<gene>
    <name evidence="1" type="primary">rpsR</name>
    <name type="ordered locus">Swoo_4210</name>
</gene>
<sequence>MARYFRRRKFCRFTAEGVTEIDYKDIVTLKNYITESGKIVPSRITGTNAKYQRQLARAIKRARYLSLLPYTDLHQ</sequence>
<accession>B1KHY8</accession>
<reference key="1">
    <citation type="submission" date="2008-02" db="EMBL/GenBank/DDBJ databases">
        <title>Complete sequence of Shewanella woodyi ATCC 51908.</title>
        <authorList>
            <consortium name="US DOE Joint Genome Institute"/>
            <person name="Copeland A."/>
            <person name="Lucas S."/>
            <person name="Lapidus A."/>
            <person name="Glavina del Rio T."/>
            <person name="Dalin E."/>
            <person name="Tice H."/>
            <person name="Bruce D."/>
            <person name="Goodwin L."/>
            <person name="Pitluck S."/>
            <person name="Sims D."/>
            <person name="Brettin T."/>
            <person name="Detter J.C."/>
            <person name="Han C."/>
            <person name="Kuske C.R."/>
            <person name="Schmutz J."/>
            <person name="Larimer F."/>
            <person name="Land M."/>
            <person name="Hauser L."/>
            <person name="Kyrpides N."/>
            <person name="Lykidis A."/>
            <person name="Zhao J.-S."/>
            <person name="Richardson P."/>
        </authorList>
    </citation>
    <scope>NUCLEOTIDE SEQUENCE [LARGE SCALE GENOMIC DNA]</scope>
    <source>
        <strain>ATCC 51908 / MS32</strain>
    </source>
</reference>
<comment type="function">
    <text evidence="1">Binds as a heterodimer with protein bS6 to the central domain of the 16S rRNA, where it helps stabilize the platform of the 30S subunit.</text>
</comment>
<comment type="subunit">
    <text evidence="1">Part of the 30S ribosomal subunit. Forms a tight heterodimer with protein bS6.</text>
</comment>
<comment type="similarity">
    <text evidence="1">Belongs to the bacterial ribosomal protein bS18 family.</text>
</comment>